<evidence type="ECO:0000250" key="1"/>
<evidence type="ECO:0000250" key="2">
    <source>
        <dbReference type="UniProtKB" id="P30622"/>
    </source>
</evidence>
<evidence type="ECO:0000255" key="3">
    <source>
        <dbReference type="PROSITE-ProRule" id="PRU00045"/>
    </source>
</evidence>
<evidence type="ECO:0000256" key="4">
    <source>
        <dbReference type="SAM" id="MobiDB-lite"/>
    </source>
</evidence>
<evidence type="ECO:0000269" key="5">
    <source>
    </source>
</evidence>
<evidence type="ECO:0000269" key="6">
    <source>
    </source>
</evidence>
<evidence type="ECO:0000303" key="7">
    <source>
    </source>
</evidence>
<evidence type="ECO:0000303" key="8">
    <source>
    </source>
</evidence>
<evidence type="ECO:0000303" key="9">
    <source>
    </source>
</evidence>
<evidence type="ECO:0007744" key="10">
    <source>
    </source>
</evidence>
<protein>
    <recommendedName>
        <fullName>CAP-Gly domain-containing linker protein 1</fullName>
    </recommendedName>
    <alternativeName>
        <fullName evidence="7 8 9">Cytoplasmic linker protein 170</fullName>
        <shortName evidence="7 8 9">CLIP-170</shortName>
    </alternativeName>
    <alternativeName>
        <fullName>Restin</fullName>
    </alternativeName>
</protein>
<gene>
    <name type="primary">Clip1</name>
    <name type="synonym">Cyln1</name>
    <name type="synonym">Rsn</name>
</gene>
<proteinExistence type="evidence at protein level"/>
<keyword id="KW-0966">Cell projection</keyword>
<keyword id="KW-0175">Coiled coil</keyword>
<keyword id="KW-0963">Cytoplasm</keyword>
<keyword id="KW-0968">Cytoplasmic vesicle</keyword>
<keyword id="KW-0206">Cytoskeleton</keyword>
<keyword id="KW-0472">Membrane</keyword>
<keyword id="KW-0479">Metal-binding</keyword>
<keyword id="KW-0493">Microtubule</keyword>
<keyword id="KW-0597">Phosphoprotein</keyword>
<keyword id="KW-1185">Reference proteome</keyword>
<keyword id="KW-0677">Repeat</keyword>
<keyword id="KW-0813">Transport</keyword>
<keyword id="KW-0862">Zinc</keyword>
<keyword id="KW-0863">Zinc-finger</keyword>
<organism>
    <name type="scientific">Rattus norvegicus</name>
    <name type="common">Rat</name>
    <dbReference type="NCBI Taxonomy" id="10116"/>
    <lineage>
        <taxon>Eukaryota</taxon>
        <taxon>Metazoa</taxon>
        <taxon>Chordata</taxon>
        <taxon>Craniata</taxon>
        <taxon>Vertebrata</taxon>
        <taxon>Euteleostomi</taxon>
        <taxon>Mammalia</taxon>
        <taxon>Eutheria</taxon>
        <taxon>Euarchontoglires</taxon>
        <taxon>Glires</taxon>
        <taxon>Rodentia</taxon>
        <taxon>Myomorpha</taxon>
        <taxon>Muroidea</taxon>
        <taxon>Muridae</taxon>
        <taxon>Murinae</taxon>
        <taxon>Rattus</taxon>
    </lineage>
</organism>
<accession>Q9JK25</accession>
<accession>A0A0G2K3T3</accession>
<comment type="function">
    <text evidence="2">Binds to the plus end of microtubules and regulates the dynamics of the microtubule cytoskeleton. Promotes microtubule growth and microtubule bundling. Links cytoplasmic vesicles to microtubules and thereby plays an important role in intracellular vesicle trafficking. Plays a role macropinocytosis and endosome trafficking.</text>
</comment>
<comment type="subunit">
    <text evidence="2 5 6">Interacts with MTOR; phosphorylates and regulates CLIP1. Interacts (via CAP-Gly domains) with tubulin and TUBA1B. Interacts with SLAIN2. Interacts with MAPRE1 and MAPRE3 (By similarity). Interacts (via zinc finger) with DCTN1 (PubMed:20519438, PubMed:26972003). Binds preferentially to tyrosinated microtubules, and only marginally to detyrosinated microtubules (PubMed:26972003).</text>
</comment>
<comment type="interaction">
    <interactant intactId="EBI-908338">
        <id>Q9JK25</id>
    </interactant>
    <interactant intactId="EBI-913476">
        <id>Q7Z460</id>
        <label>CLASP1</label>
    </interactant>
    <organismsDiffer>true</organismsDiffer>
    <experiments>2</experiments>
</comment>
<comment type="interaction">
    <interactant intactId="EBI-908338">
        <id>Q9JK25</id>
    </interactant>
    <interactant intactId="EBI-348169">
        <id>P67870</id>
        <label>CSNK2B</label>
    </interactant>
    <organismsDiffer>true</organismsDiffer>
    <experiments>2</experiments>
</comment>
<comment type="subcellular location">
    <subcellularLocation>
        <location evidence="2">Cytoplasm</location>
    </subcellularLocation>
    <subcellularLocation>
        <location evidence="6">Cytoplasm</location>
        <location evidence="6">Cytoskeleton</location>
    </subcellularLocation>
    <subcellularLocation>
        <location evidence="2">Cytoplasmic vesicle membrane</location>
        <topology evidence="1">Peripheral membrane protein</topology>
        <orientation evidence="1">Cytoplasmic side</orientation>
    </subcellularLocation>
    <subcellularLocation>
        <location evidence="2">Cell projection</location>
        <location evidence="2">Ruffle</location>
    </subcellularLocation>
    <text evidence="2 6">Localizes to microtubule plus ends. Localizes preferentially to the ends of tyrosinated microtubules (PubMed:26972003). Accumulates in plasma membrane regions with ruffling and protrusions. Associates with the membranes of intermediate macropinocytic vesicles (By similarity).</text>
</comment>
<comment type="domain">
    <text evidence="2">Intramolecular interaction between the zinc finger domain and the CAP-Gly domains may inhibit interaction with tubulin.</text>
</comment>
<comment type="PTM">
    <text evidence="2 5 6">Phosphorylated. Phosphorylation induces conformational changes by increasing the affinity of the N-terminus for C-terminus, resulting in inhibition of its function thus decreasing its binding to microtubules and DCTN1. Exhibits a folded, autoinhibited conformation when phosphorylated and an open conformation when dephosphorylated with increased binding affinity to microtubules and DCTN1. Phosphorylation regulates its recruitment to tyrosinated microtubules and the recruitment of vesicular cargo to microtubules in neurons (PubMed:20519438, PubMed:26972003). Phosphorylation by MTOR may positively regulate CLIP1 association with microtubules (By similarity).</text>
</comment>
<name>CLIP1_RAT</name>
<reference key="1">
    <citation type="journal article" date="2001" name="Cell">
        <title>Clasps are CLIP-115 and -170 associating proteins involved in the regional regulation of microtubule dynamics in motile fibroblasts.</title>
        <authorList>
            <person name="Akhmanova A."/>
            <person name="Hoogenraad C.C."/>
            <person name="Drabek K."/>
            <person name="Stepanova T."/>
            <person name="Dortland B."/>
            <person name="Verkerk T."/>
            <person name="Vermeulen W."/>
            <person name="Burgering B.M."/>
            <person name="de Zeeuw C.I."/>
            <person name="Grosveld F."/>
            <person name="Galjart N."/>
        </authorList>
    </citation>
    <scope>NUCLEOTIDE SEQUENCE [MRNA]</scope>
    <source>
        <strain>Wistar</strain>
        <tissue>Hippocampus</tissue>
    </source>
</reference>
<reference key="2">
    <citation type="journal article" date="2004" name="Nature">
        <title>Genome sequence of the Brown Norway rat yields insights into mammalian evolution.</title>
        <authorList>
            <person name="Gibbs R.A."/>
            <person name="Weinstock G.M."/>
            <person name="Metzker M.L."/>
            <person name="Muzny D.M."/>
            <person name="Sodergren E.J."/>
            <person name="Scherer S."/>
            <person name="Scott G."/>
            <person name="Steffen D."/>
            <person name="Worley K.C."/>
            <person name="Burch P.E."/>
            <person name="Okwuonu G."/>
            <person name="Hines S."/>
            <person name="Lewis L."/>
            <person name="Deramo C."/>
            <person name="Delgado O."/>
            <person name="Dugan-Rocha S."/>
            <person name="Miner G."/>
            <person name="Morgan M."/>
            <person name="Hawes A."/>
            <person name="Gill R."/>
            <person name="Holt R.A."/>
            <person name="Adams M.D."/>
            <person name="Amanatides P.G."/>
            <person name="Baden-Tillson H."/>
            <person name="Barnstead M."/>
            <person name="Chin S."/>
            <person name="Evans C.A."/>
            <person name="Ferriera S."/>
            <person name="Fosler C."/>
            <person name="Glodek A."/>
            <person name="Gu Z."/>
            <person name="Jennings D."/>
            <person name="Kraft C.L."/>
            <person name="Nguyen T."/>
            <person name="Pfannkoch C.M."/>
            <person name="Sitter C."/>
            <person name="Sutton G.G."/>
            <person name="Venter J.C."/>
            <person name="Woodage T."/>
            <person name="Smith D."/>
            <person name="Lee H.-M."/>
            <person name="Gustafson E."/>
            <person name="Cahill P."/>
            <person name="Kana A."/>
            <person name="Doucette-Stamm L."/>
            <person name="Weinstock K."/>
            <person name="Fechtel K."/>
            <person name="Weiss R.B."/>
            <person name="Dunn D.M."/>
            <person name="Green E.D."/>
            <person name="Blakesley R.W."/>
            <person name="Bouffard G.G."/>
            <person name="De Jong P.J."/>
            <person name="Osoegawa K."/>
            <person name="Zhu B."/>
            <person name="Marra M."/>
            <person name="Schein J."/>
            <person name="Bosdet I."/>
            <person name="Fjell C."/>
            <person name="Jones S."/>
            <person name="Krzywinski M."/>
            <person name="Mathewson C."/>
            <person name="Siddiqui A."/>
            <person name="Wye N."/>
            <person name="McPherson J."/>
            <person name="Zhao S."/>
            <person name="Fraser C.M."/>
            <person name="Shetty J."/>
            <person name="Shatsman S."/>
            <person name="Geer K."/>
            <person name="Chen Y."/>
            <person name="Abramzon S."/>
            <person name="Nierman W.C."/>
            <person name="Havlak P.H."/>
            <person name="Chen R."/>
            <person name="Durbin K.J."/>
            <person name="Egan A."/>
            <person name="Ren Y."/>
            <person name="Song X.-Z."/>
            <person name="Li B."/>
            <person name="Liu Y."/>
            <person name="Qin X."/>
            <person name="Cawley S."/>
            <person name="Cooney A.J."/>
            <person name="D'Souza L.M."/>
            <person name="Martin K."/>
            <person name="Wu J.Q."/>
            <person name="Gonzalez-Garay M.L."/>
            <person name="Jackson A.R."/>
            <person name="Kalafus K.J."/>
            <person name="McLeod M.P."/>
            <person name="Milosavljevic A."/>
            <person name="Virk D."/>
            <person name="Volkov A."/>
            <person name="Wheeler D.A."/>
            <person name="Zhang Z."/>
            <person name="Bailey J.A."/>
            <person name="Eichler E.E."/>
            <person name="Tuzun E."/>
            <person name="Birney E."/>
            <person name="Mongin E."/>
            <person name="Ureta-Vidal A."/>
            <person name="Woodwark C."/>
            <person name="Zdobnov E."/>
            <person name="Bork P."/>
            <person name="Suyama M."/>
            <person name="Torrents D."/>
            <person name="Alexandersson M."/>
            <person name="Trask B.J."/>
            <person name="Young J.M."/>
            <person name="Huang H."/>
            <person name="Wang H."/>
            <person name="Xing H."/>
            <person name="Daniels S."/>
            <person name="Gietzen D."/>
            <person name="Schmidt J."/>
            <person name="Stevens K."/>
            <person name="Vitt U."/>
            <person name="Wingrove J."/>
            <person name="Camara F."/>
            <person name="Mar Alba M."/>
            <person name="Abril J.F."/>
            <person name="Guigo R."/>
            <person name="Smit A."/>
            <person name="Dubchak I."/>
            <person name="Rubin E.M."/>
            <person name="Couronne O."/>
            <person name="Poliakov A."/>
            <person name="Huebner N."/>
            <person name="Ganten D."/>
            <person name="Goesele C."/>
            <person name="Hummel O."/>
            <person name="Kreitler T."/>
            <person name="Lee Y.-A."/>
            <person name="Monti J."/>
            <person name="Schulz H."/>
            <person name="Zimdahl H."/>
            <person name="Himmelbauer H."/>
            <person name="Lehrach H."/>
            <person name="Jacob H.J."/>
            <person name="Bromberg S."/>
            <person name="Gullings-Handley J."/>
            <person name="Jensen-Seaman M.I."/>
            <person name="Kwitek A.E."/>
            <person name="Lazar J."/>
            <person name="Pasko D."/>
            <person name="Tonellato P.J."/>
            <person name="Twigger S."/>
            <person name="Ponting C.P."/>
            <person name="Duarte J.M."/>
            <person name="Rice S."/>
            <person name="Goodstadt L."/>
            <person name="Beatson S.A."/>
            <person name="Emes R.D."/>
            <person name="Winter E.E."/>
            <person name="Webber C."/>
            <person name="Brandt P."/>
            <person name="Nyakatura G."/>
            <person name="Adetobi M."/>
            <person name="Chiaromonte F."/>
            <person name="Elnitski L."/>
            <person name="Eswara P."/>
            <person name="Hardison R.C."/>
            <person name="Hou M."/>
            <person name="Kolbe D."/>
            <person name="Makova K."/>
            <person name="Miller W."/>
            <person name="Nekrutenko A."/>
            <person name="Riemer C."/>
            <person name="Schwartz S."/>
            <person name="Taylor J."/>
            <person name="Yang S."/>
            <person name="Zhang Y."/>
            <person name="Lindpaintner K."/>
            <person name="Andrews T.D."/>
            <person name="Caccamo M."/>
            <person name="Clamp M."/>
            <person name="Clarke L."/>
            <person name="Curwen V."/>
            <person name="Durbin R.M."/>
            <person name="Eyras E."/>
            <person name="Searle S.M."/>
            <person name="Cooper G.M."/>
            <person name="Batzoglou S."/>
            <person name="Brudno M."/>
            <person name="Sidow A."/>
            <person name="Stone E.A."/>
            <person name="Payseur B.A."/>
            <person name="Bourque G."/>
            <person name="Lopez-Otin C."/>
            <person name="Puente X.S."/>
            <person name="Chakrabarti K."/>
            <person name="Chatterji S."/>
            <person name="Dewey C."/>
            <person name="Pachter L."/>
            <person name="Bray N."/>
            <person name="Yap V.B."/>
            <person name="Caspi A."/>
            <person name="Tesler G."/>
            <person name="Pevzner P.A."/>
            <person name="Haussler D."/>
            <person name="Roskin K.M."/>
            <person name="Baertsch R."/>
            <person name="Clawson H."/>
            <person name="Furey T.S."/>
            <person name="Hinrichs A.S."/>
            <person name="Karolchik D."/>
            <person name="Kent W.J."/>
            <person name="Rosenbloom K.R."/>
            <person name="Trumbower H."/>
            <person name="Weirauch M."/>
            <person name="Cooper D.N."/>
            <person name="Stenson P.D."/>
            <person name="Ma B."/>
            <person name="Brent M."/>
            <person name="Arumugam M."/>
            <person name="Shteynberg D."/>
            <person name="Copley R.R."/>
            <person name="Taylor M.S."/>
            <person name="Riethman H."/>
            <person name="Mudunuri U."/>
            <person name="Peterson J."/>
            <person name="Guyer M."/>
            <person name="Felsenfeld A."/>
            <person name="Old S."/>
            <person name="Mockrin S."/>
            <person name="Collins F.S."/>
        </authorList>
    </citation>
    <scope>NUCLEOTIDE SEQUENCE [LARGE SCALE GENOMIC DNA]</scope>
    <source>
        <strain>Brown Norway</strain>
    </source>
</reference>
<reference key="3">
    <citation type="journal article" date="2010" name="Mol. Biol. Cell">
        <title>Phosphorylation controls autoinhibition of cytoplasmic linker protein-170.</title>
        <authorList>
            <person name="Lee H.S."/>
            <person name="Komarova Y.A."/>
            <person name="Nadezhdina E.S."/>
            <person name="Anjum R."/>
            <person name="Peloquin J.G."/>
            <person name="Schober J.M."/>
            <person name="Danciu O."/>
            <person name="van Haren J."/>
            <person name="Galjart N."/>
            <person name="Gygi S.P."/>
            <person name="Akhmanova A."/>
            <person name="Borisy G.G."/>
        </authorList>
    </citation>
    <scope>PHOSPHORYLATION AT SER-309; SER-311; SER-314 AND SER-347</scope>
    <scope>MUTAGENESIS OF SER-309; SER-311; SER-313; SER-319 AND SER-320</scope>
    <scope>INTERACTION WITH DCTN1</scope>
</reference>
<reference key="4">
    <citation type="journal article" date="2012" name="Nat. Commun.">
        <title>Quantitative maps of protein phosphorylation sites across 14 different rat organs and tissues.</title>
        <authorList>
            <person name="Lundby A."/>
            <person name="Secher A."/>
            <person name="Lage K."/>
            <person name="Nordsborg N.B."/>
            <person name="Dmytriyev A."/>
            <person name="Lundby C."/>
            <person name="Olsen J.V."/>
        </authorList>
    </citation>
    <scope>PHOSPHORYLATION [LARGE SCALE ANALYSIS] AT SER-194; SER-199; SER-203; SER-309; SER-1116 AND SER-1246</scope>
    <scope>IDENTIFICATION BY MASS SPECTROMETRY [LARGE SCALE ANALYSIS]</scope>
</reference>
<reference key="5">
    <citation type="journal article" date="2016" name="Cell Rep.">
        <title>Alpha-tubulin tyrosination and CLIP-170 phosphorylation regulate the initiation of dynein-driven transport in neurons.</title>
        <authorList>
            <person name="Nirschl J.J."/>
            <person name="Magiera M.M."/>
            <person name="Lazarus J.E."/>
            <person name="Janke C."/>
            <person name="Holzbaur E.L."/>
        </authorList>
    </citation>
    <scope>PHOSPHORYLATION</scope>
    <scope>SUBCELLULAR LOCATION</scope>
    <scope>MUTAGENESIS OF SER-309; SER-311; SER-313; SER-319 AND SER-320</scope>
    <scope>INTERACTION WITH DCTN1</scope>
    <scope>ASSOCIATION WITH MICROTUBULES</scope>
</reference>
<feature type="chain" id="PRO_0000438322" description="CAP-Gly domain-containing linker protein 1">
    <location>
        <begin position="1"/>
        <end position="1320"/>
    </location>
</feature>
<feature type="domain" description="CAP-Gly 1" evidence="3">
    <location>
        <begin position="78"/>
        <end position="120"/>
    </location>
</feature>
<feature type="domain" description="CAP-Gly 2" evidence="3">
    <location>
        <begin position="231"/>
        <end position="273"/>
    </location>
</feature>
<feature type="zinc finger region" description="CCHC-type" evidence="2">
    <location>
        <begin position="1299"/>
        <end position="1316"/>
    </location>
</feature>
<feature type="region of interest" description="Disordered" evidence="4">
    <location>
        <begin position="1"/>
        <end position="53"/>
    </location>
</feature>
<feature type="region of interest" description="Important for tubulin binding" evidence="2">
    <location>
        <begin position="97"/>
        <end position="101"/>
    </location>
</feature>
<feature type="region of interest" description="Disordered" evidence="4">
    <location>
        <begin position="156"/>
        <end position="181"/>
    </location>
</feature>
<feature type="region of interest" description="Disordered" evidence="4">
    <location>
        <begin position="301"/>
        <end position="338"/>
    </location>
</feature>
<feature type="region of interest" description="Disordered" evidence="4">
    <location>
        <begin position="1089"/>
        <end position="1109"/>
    </location>
</feature>
<feature type="region of interest" description="Disordered" evidence="4">
    <location>
        <begin position="1178"/>
        <end position="1201"/>
    </location>
</feature>
<feature type="compositionally biased region" description="Low complexity" evidence="4">
    <location>
        <begin position="21"/>
        <end position="35"/>
    </location>
</feature>
<feature type="compositionally biased region" description="Polar residues" evidence="4">
    <location>
        <begin position="156"/>
        <end position="171"/>
    </location>
</feature>
<feature type="compositionally biased region" description="Low complexity" evidence="4">
    <location>
        <begin position="301"/>
        <end position="331"/>
    </location>
</feature>
<feature type="compositionally biased region" description="Basic and acidic residues" evidence="4">
    <location>
        <begin position="1096"/>
        <end position="1109"/>
    </location>
</feature>
<feature type="compositionally biased region" description="Polar residues" evidence="4">
    <location>
        <begin position="1180"/>
        <end position="1190"/>
    </location>
</feature>
<feature type="modified residue" description="Phosphoserine" evidence="2">
    <location>
        <position position="48"/>
    </location>
</feature>
<feature type="modified residue" description="Phosphothreonine" evidence="2">
    <location>
        <position position="50"/>
    </location>
</feature>
<feature type="modified residue" description="Phosphoserine" evidence="2">
    <location>
        <position position="146"/>
    </location>
</feature>
<feature type="modified residue" description="Phosphothreonine" evidence="2">
    <location>
        <position position="181"/>
    </location>
</feature>
<feature type="modified residue" description="Phosphoserine" evidence="10">
    <location>
        <position position="194"/>
    </location>
</feature>
<feature type="modified residue" description="Phosphoserine" evidence="2">
    <location>
        <position position="196"/>
    </location>
</feature>
<feature type="modified residue" description="Phosphoserine" evidence="10">
    <location>
        <position position="199"/>
    </location>
</feature>
<feature type="modified residue" description="Phosphoserine" evidence="10">
    <location>
        <position position="203"/>
    </location>
</feature>
<feature type="modified residue" description="Phosphoserine" evidence="5 10">
    <location>
        <position position="309"/>
    </location>
</feature>
<feature type="modified residue" description="Phosphoserine; by PKA" evidence="5">
    <location>
        <position position="311"/>
    </location>
</feature>
<feature type="modified residue" description="Phosphoserine" evidence="5">
    <location>
        <position position="314"/>
    </location>
</feature>
<feature type="modified residue" description="Phosphoserine" evidence="5">
    <location>
        <position position="347"/>
    </location>
</feature>
<feature type="modified residue" description="Phosphoserine" evidence="10">
    <location>
        <position position="1116"/>
    </location>
</feature>
<feature type="modified residue" description="Phosphoserine" evidence="10">
    <location>
        <position position="1246"/>
    </location>
</feature>
<feature type="mutagenesis site" description="Phosphodeficient mutant which exhibits an open conformation with a high affinity for microtubules and DCTN1; when associated with A-311; A-313; A-319 and A-320." evidence="5 6">
    <original>S</original>
    <variation>A</variation>
    <location>
        <position position="309"/>
    </location>
</feature>
<feature type="mutagenesis site" description="Phosphomimetic mutant which exhibits a closed autoinhibited conformation with a low affinity for microtubules and DCTN1; when associated with E-311; E-313; E-319 and E-320." evidence="5 6">
    <original>S</original>
    <variation>E</variation>
    <location>
        <position position="309"/>
    </location>
</feature>
<feature type="mutagenesis site" description="Phosphodeficient mutant which exhibits an open conformation with a high affinity for microtubules and DCTN1; when associated with A-309; A-313; A-319 and A-320." evidence="5 6">
    <original>S</original>
    <variation>A</variation>
    <location>
        <position position="311"/>
    </location>
</feature>
<feature type="mutagenesis site" description="Phosphomimetic mutant which exhibits a closed autoinhibited conformation with a low affinity for microtubules and DCTN1; when associated with E-309; E-313; E-319 and E-320." evidence="5 6">
    <original>S</original>
    <variation>E</variation>
    <location>
        <position position="311"/>
    </location>
</feature>
<feature type="mutagenesis site" description="Phosphodeficient mutant which exhibits an open conformation with a high affinity for microtubules and DCTN1; when associated with A-309; A-311; A-319 and A-320." evidence="5 6">
    <original>S</original>
    <variation>A</variation>
    <location>
        <position position="313"/>
    </location>
</feature>
<feature type="mutagenesis site" description="Phosphomimetic mutant which exhibits a closed autoinhibited conformation with a low affinity for microtubules and DCTN1; when associated with E-309; E-311; E-319 and E-320." evidence="5 6">
    <original>S</original>
    <variation>E</variation>
    <location>
        <position position="313"/>
    </location>
</feature>
<feature type="mutagenesis site" description="Phosphodeficient mutant which exhibits an open conformation with a high affinity for microtubules and DCTN1; when associated with A-309; A-311; A-313 and A-320." evidence="5 6">
    <original>S</original>
    <variation>A</variation>
    <location>
        <position position="319"/>
    </location>
</feature>
<feature type="mutagenesis site" description="Phosphomimetic mutant which exhibits a closed autoinhibited conformation with a low affinity for microtubules and DCTN1; when associated with E-30; E-311; E-313 and E-320." evidence="5 6">
    <original>S</original>
    <variation>E</variation>
    <location>
        <position position="319"/>
    </location>
</feature>
<feature type="mutagenesis site" description="Phosphodeficient mutant which exhibits an open conformation with a high affinity for microtubules and DCTN1; when associated with A-309; A-311; A-313 and A-319." evidence="5 6">
    <original>S</original>
    <variation>A</variation>
    <location>
        <position position="320"/>
    </location>
</feature>
<feature type="mutagenesis site" description="Phosphomimetic mutant, exhibits a closed autoinhibited conformation with a low affinity for microtubules and DCTN1; when associated with E-309; E-311; E-313 and E-319." evidence="5 6">
    <original>S</original>
    <variation>E</variation>
    <location>
        <position position="320"/>
    </location>
</feature>
<feature type="sequence conflict" description="In Ref. 1; CAB92974." ref="1">
    <original>A</original>
    <variation>G</variation>
    <location>
        <position position="1232"/>
    </location>
</feature>
<dbReference type="EMBL" id="AJ237670">
    <property type="protein sequence ID" value="CAB92974.1"/>
    <property type="molecule type" value="mRNA"/>
</dbReference>
<dbReference type="EMBL" id="AC117299">
    <property type="status" value="NOT_ANNOTATED_CDS"/>
    <property type="molecule type" value="Genomic_DNA"/>
</dbReference>
<dbReference type="RefSeq" id="NP_113933.2">
    <property type="nucleotide sequence ID" value="NM_031745.2"/>
</dbReference>
<dbReference type="SMR" id="Q9JK25"/>
<dbReference type="FunCoup" id="Q9JK25">
    <property type="interactions" value="2205"/>
</dbReference>
<dbReference type="IntAct" id="Q9JK25">
    <property type="interactions" value="9"/>
</dbReference>
<dbReference type="MINT" id="Q9JK25"/>
<dbReference type="STRING" id="10116.ENSRNOP00000073711"/>
<dbReference type="GlyGen" id="Q9JK25">
    <property type="glycosylation" value="1 site"/>
</dbReference>
<dbReference type="iPTMnet" id="Q9JK25"/>
<dbReference type="PhosphoSitePlus" id="Q9JK25"/>
<dbReference type="jPOST" id="Q9JK25"/>
<dbReference type="PaxDb" id="10116-ENSRNOP00000001685"/>
<dbReference type="Ensembl" id="ENSRNOT00000001685.8">
    <property type="protein sequence ID" value="ENSRNOP00000001685.8"/>
    <property type="gene ID" value="ENSRNOG00000001247.8"/>
</dbReference>
<dbReference type="GeneID" id="65201"/>
<dbReference type="KEGG" id="rno:65201"/>
<dbReference type="UCSC" id="RGD:67404">
    <property type="organism name" value="rat"/>
</dbReference>
<dbReference type="AGR" id="RGD:67404"/>
<dbReference type="CTD" id="6249"/>
<dbReference type="RGD" id="67404">
    <property type="gene designation" value="Clip1"/>
</dbReference>
<dbReference type="eggNOG" id="KOG4568">
    <property type="taxonomic scope" value="Eukaryota"/>
</dbReference>
<dbReference type="GeneTree" id="ENSGT00940000155122"/>
<dbReference type="InParanoid" id="Q9JK25"/>
<dbReference type="PhylomeDB" id="Q9JK25"/>
<dbReference type="Reactome" id="R-RNO-141444">
    <property type="pathway name" value="Amplification of signal from unattached kinetochores via a MAD2 inhibitory signal"/>
</dbReference>
<dbReference type="Reactome" id="R-RNO-2467813">
    <property type="pathway name" value="Separation of Sister Chromatids"/>
</dbReference>
<dbReference type="Reactome" id="R-RNO-2500257">
    <property type="pathway name" value="Resolution of Sister Chromatid Cohesion"/>
</dbReference>
<dbReference type="Reactome" id="R-RNO-5626467">
    <property type="pathway name" value="RHO GTPases activate IQGAPs"/>
</dbReference>
<dbReference type="Reactome" id="R-RNO-5663220">
    <property type="pathway name" value="RHO GTPases Activate Formins"/>
</dbReference>
<dbReference type="Reactome" id="R-RNO-68877">
    <property type="pathway name" value="Mitotic Prometaphase"/>
</dbReference>
<dbReference type="Reactome" id="R-RNO-9648025">
    <property type="pathway name" value="EML4 and NUDC in mitotic spindle formation"/>
</dbReference>
<dbReference type="PRO" id="PR:Q9JK25"/>
<dbReference type="Proteomes" id="UP000002494">
    <property type="component" value="Chromosome 12"/>
</dbReference>
<dbReference type="Bgee" id="ENSRNOG00000001247">
    <property type="expression patterns" value="Expressed in esophagus and 19 other cell types or tissues"/>
</dbReference>
<dbReference type="ExpressionAtlas" id="Q9JK25">
    <property type="expression patterns" value="baseline and differential"/>
</dbReference>
<dbReference type="GO" id="GO:0005938">
    <property type="term" value="C:cell cortex"/>
    <property type="evidence" value="ECO:0000318"/>
    <property type="project" value="GO_Central"/>
</dbReference>
<dbReference type="GO" id="GO:0005813">
    <property type="term" value="C:centrosome"/>
    <property type="evidence" value="ECO:0000266"/>
    <property type="project" value="RGD"/>
</dbReference>
<dbReference type="GO" id="GO:0005881">
    <property type="term" value="C:cytoplasmic microtubule"/>
    <property type="evidence" value="ECO:0000314"/>
    <property type="project" value="UniProtKB"/>
</dbReference>
<dbReference type="GO" id="GO:0030659">
    <property type="term" value="C:cytoplasmic vesicle membrane"/>
    <property type="evidence" value="ECO:0007669"/>
    <property type="project" value="UniProtKB-SubCell"/>
</dbReference>
<dbReference type="GO" id="GO:0044354">
    <property type="term" value="C:macropinosome"/>
    <property type="evidence" value="ECO:0000266"/>
    <property type="project" value="RGD"/>
</dbReference>
<dbReference type="GO" id="GO:0005874">
    <property type="term" value="C:microtubule"/>
    <property type="evidence" value="ECO:0000266"/>
    <property type="project" value="RGD"/>
</dbReference>
<dbReference type="GO" id="GO:0015630">
    <property type="term" value="C:microtubule cytoskeleton"/>
    <property type="evidence" value="ECO:0000266"/>
    <property type="project" value="RGD"/>
</dbReference>
<dbReference type="GO" id="GO:0035371">
    <property type="term" value="C:microtubule plus-end"/>
    <property type="evidence" value="ECO:0000314"/>
    <property type="project" value="UniProtKB"/>
</dbReference>
<dbReference type="GO" id="GO:0005635">
    <property type="term" value="C:nuclear envelope"/>
    <property type="evidence" value="ECO:0000266"/>
    <property type="project" value="RGD"/>
</dbReference>
<dbReference type="GO" id="GO:0005634">
    <property type="term" value="C:nucleus"/>
    <property type="evidence" value="ECO:0000318"/>
    <property type="project" value="GO_Central"/>
</dbReference>
<dbReference type="GO" id="GO:0001726">
    <property type="term" value="C:ruffle"/>
    <property type="evidence" value="ECO:0007669"/>
    <property type="project" value="UniProtKB-SubCell"/>
</dbReference>
<dbReference type="GO" id="GO:0008017">
    <property type="term" value="F:microtubule binding"/>
    <property type="evidence" value="ECO:0000314"/>
    <property type="project" value="UniProtKB"/>
</dbReference>
<dbReference type="GO" id="GO:0051010">
    <property type="term" value="F:microtubule plus-end binding"/>
    <property type="evidence" value="ECO:0000314"/>
    <property type="project" value="UniProtKB"/>
</dbReference>
<dbReference type="GO" id="GO:0015631">
    <property type="term" value="F:tubulin binding"/>
    <property type="evidence" value="ECO:0000266"/>
    <property type="project" value="RGD"/>
</dbReference>
<dbReference type="GO" id="GO:0008270">
    <property type="term" value="F:zinc ion binding"/>
    <property type="evidence" value="ECO:0000266"/>
    <property type="project" value="RGD"/>
</dbReference>
<dbReference type="GO" id="GO:0031122">
    <property type="term" value="P:cytoplasmic microtubule organization"/>
    <property type="evidence" value="ECO:0000318"/>
    <property type="project" value="GO_Central"/>
</dbReference>
<dbReference type="GO" id="GO:0001578">
    <property type="term" value="P:microtubule bundle formation"/>
    <property type="evidence" value="ECO:0000266"/>
    <property type="project" value="RGD"/>
</dbReference>
<dbReference type="GO" id="GO:1900006">
    <property type="term" value="P:positive regulation of dendrite development"/>
    <property type="evidence" value="ECO:0000315"/>
    <property type="project" value="RGD"/>
</dbReference>
<dbReference type="GO" id="GO:0031116">
    <property type="term" value="P:positive regulation of microtubule polymerization"/>
    <property type="evidence" value="ECO:0000266"/>
    <property type="project" value="RGD"/>
</dbReference>
<dbReference type="GO" id="GO:0044861">
    <property type="term" value="P:protein transport into plasma membrane raft"/>
    <property type="evidence" value="ECO:0000266"/>
    <property type="project" value="RGD"/>
</dbReference>
<dbReference type="FunFam" id="2.30.30.190:FF:000002">
    <property type="entry name" value="CAP-Gly domain containing linker protein 1"/>
    <property type="match status" value="1"/>
</dbReference>
<dbReference type="FunFam" id="2.30.30.190:FF:000001">
    <property type="entry name" value="Putative CAP-Gly domain-containing linker protein 1"/>
    <property type="match status" value="1"/>
</dbReference>
<dbReference type="Gene3D" id="2.30.30.190">
    <property type="entry name" value="CAP Gly-rich-like domain"/>
    <property type="match status" value="2"/>
</dbReference>
<dbReference type="Gene3D" id="1.20.5.1160">
    <property type="entry name" value="Vasodilator-stimulated phosphoprotein"/>
    <property type="match status" value="1"/>
</dbReference>
<dbReference type="InterPro" id="IPR036859">
    <property type="entry name" value="CAP-Gly_dom_sf"/>
</dbReference>
<dbReference type="InterPro" id="IPR000938">
    <property type="entry name" value="CAP-Gly_domain"/>
</dbReference>
<dbReference type="InterPro" id="IPR032108">
    <property type="entry name" value="CLIP1_ZNF"/>
</dbReference>
<dbReference type="PANTHER" id="PTHR18916:SF44">
    <property type="entry name" value="CAP-GLY DOMAIN-CONTAINING LINKER PROTEIN 1"/>
    <property type="match status" value="1"/>
</dbReference>
<dbReference type="PANTHER" id="PTHR18916">
    <property type="entry name" value="DYNACTIN 1-RELATED MICROTUBULE-BINDING"/>
    <property type="match status" value="1"/>
</dbReference>
<dbReference type="Pfam" id="PF01302">
    <property type="entry name" value="CAP_GLY"/>
    <property type="match status" value="2"/>
</dbReference>
<dbReference type="Pfam" id="PF16641">
    <property type="entry name" value="CLIP1_ZNF"/>
    <property type="match status" value="2"/>
</dbReference>
<dbReference type="SMART" id="SM01052">
    <property type="entry name" value="CAP_GLY"/>
    <property type="match status" value="2"/>
</dbReference>
<dbReference type="SUPFAM" id="SSF74924">
    <property type="entry name" value="Cap-Gly domain"/>
    <property type="match status" value="2"/>
</dbReference>
<dbReference type="PROSITE" id="PS00845">
    <property type="entry name" value="CAP_GLY_1"/>
    <property type="match status" value="2"/>
</dbReference>
<dbReference type="PROSITE" id="PS50245">
    <property type="entry name" value="CAP_GLY_2"/>
    <property type="match status" value="2"/>
</dbReference>
<sequence length="1320" mass="148279">MSMLKPSGLKAPTKILKPGSTALKTPAAAAAPLEKTVPSEKASGPPSSETQEEFVDDFRVGERVWVNGNKPGFIQFLGETQFAPGQWAGIVLDEPIGKNDGSVAGVRYFQCEPLKGIFTRPSKLTRKVQAEDEANGLQTAHARAASPLSTAAATMVSSSPATPSNIPQKPSQPVAKETSATPQISNLTKTASESISNLSEAGSVKKGERELKIGDRVLVGGTKAGVVRFLGETDFAKGEWCGVELDEPLGKNDGAVAGTRYFQCQPKYGLFAPVHKVTKIGFPSTTPAKAKAAAVRRVMATTPASLKRSPSASSLSSMSSVASSVSSKPSRTGLLTETSSRYARKISGTTALQEALKEKQQHIEQLLAERDLERAEVAKATSHVGEIEQELALARDGHDQHVLELEAKMDQLRTMVEAADREKVELLNQLEEEKRKVEDLQFRVEEESITKGDLETQTKLEHARIKELEQSLLFEKTKADKLQRELEDTRVATVSEKSRIMELEKDLALRVQEVAELRRRLESSKPPGDVDMSLSLLQEISALQEKLEVTHTDHQNEVTSLKDHFGTREEMFQKEIKALHAATEKLSKENESLRSKLDHANKENSDVIALWKSKLETAIASHQQAMEELKVSFSKGIGTDSAEFAELKTQIERLRLDYQHEIESLQSKQDSERSAHAKEMESMKAKLMKIIKEKEDSLEAVKARLDTAEDQHLVEMEEMLSKLQEAEIKKEKFASASEEAVSTQTSMQDTVNKLHQKEEQFNMLSSELEKLRENLTDMEAKFKEKDEREDQLVKAKEKLENDIAEIMKMSGDNSSQLTKMNDELRLKERSVEELQLKLTKANENASLLQKSIGEVTLKAEQSQQEAAKKHEEEKKELENKLLELEKKMETSHYQCQDLKAKYEKASSETKIKHEEILQNFQKMLVDTEDKLKAAQEANRDLMQDMEELKSQADKAKAAQTAEDAMQIMEQMTKEKTETLASLEDTKQTNAKLQSELDTLKENNLKTVEELNKSKELLNEENQKMEEFKKEIETLKQAAAQKSQQLSALQEENVKLAEELGRTRDEVTSHQKLEEERSVLNNQLLEMKKSLPSNTLRESEYRKDADEEKASLQKSISLTSALLTEKDAELEKLRNEVTVLRGENASAKSLHSVVQTLESDKVKLELKVKNLELQLKENKRQLSSSSGNTDVQTEEDERAQESQQMIDFLNSVIVDLQRKNQDLKMKVEMMSEAALNGNGEDPNSYDSDDQEKQSKKKPRLFCDICDCFDLHDTEDCPTQAQMSEDPPHSTHHGSRSEERPYCEICEMFGHWATNCNDDETF</sequence>